<sequence length="208" mass="22434">MAVVVVNSATASLLAVCLVFMAVGLCTGQIVDVKFPSCRCERELTPFAIKSAATQLTSRNPGVVNLYCFEIGIVNSGSGACYTEPASQNLSKVSVYAQAAQRDRLSAFGVLLAGAPVSNMTYLTPRWDSLNMTTISNLNFSKTQANGTRICLELFKPTTINEFCEREGASGSFCWVALFNDNNCVPPNSTVVISKRLCCPRFQSFLSP</sequence>
<feature type="signal peptide">
    <location>
        <begin position="1"/>
        <end position="11"/>
    </location>
</feature>
<feature type="chain" id="PRO_0000022458" description="Sexual inducer glycoprotein">
    <location>
        <begin position="12"/>
        <end position="208"/>
    </location>
</feature>
<feature type="glycosylation site" description="N-linked (GlcNAc...) asparagine" evidence="1">
    <location>
        <position position="89"/>
    </location>
</feature>
<feature type="glycosylation site" description="N-linked (GlcNAc...) asparagine">
    <location>
        <position position="119"/>
    </location>
</feature>
<feature type="glycosylation site" description="N-linked (GlcNAc...) asparagine" evidence="1">
    <location>
        <position position="131"/>
    </location>
</feature>
<feature type="glycosylation site" description="N-linked (GlcNAc...) asparagine" evidence="1">
    <location>
        <position position="139"/>
    </location>
</feature>
<feature type="glycosylation site" description="N-linked (GlcNAc...) asparagine">
    <location>
        <position position="146"/>
    </location>
</feature>
<feature type="glycosylation site" description="N-linked (GlcNAc...) asparagine" evidence="1">
    <location>
        <position position="188"/>
    </location>
</feature>
<evidence type="ECO:0000255" key="1"/>
<proteinExistence type="evidence at protein level"/>
<keyword id="KW-0903">Direct protein sequencing</keyword>
<keyword id="KW-0325">Glycoprotein</keyword>
<keyword id="KW-0732">Signal</keyword>
<protein>
    <recommendedName>
        <fullName>Sexual inducer glycoprotein</fullName>
    </recommendedName>
</protein>
<reference key="1">
    <citation type="journal article" date="1988" name="FEBS Lett.">
        <title>The sexual inducer of Volvox carteri. Primary structure deduced from cDNA sequence.</title>
        <authorList>
            <person name="Mages H.-W."/>
            <person name="Tschochner H."/>
            <person name="Sumper M."/>
        </authorList>
    </citation>
    <scope>NUCLEOTIDE SEQUENCE</scope>
    <source>
        <strain>f. Nagariensis 69-1B</strain>
    </source>
</reference>
<reference key="2">
    <citation type="journal article" date="1987" name="EMBO J.">
        <title>The sexual inducer of Volvox carteri: purification, chemical characterization and identification of its gene.</title>
        <authorList>
            <person name="Tschochner H."/>
            <person name="Lottspeich F."/>
            <person name="Sumper M."/>
        </authorList>
    </citation>
    <scope>NUCLEOTIDE SEQUENCE OF 40-164</scope>
    <scope>PARTIAL PROTEIN SEQUENCE</scope>
    <source>
        <strain>f. Nagariensis / HK10</strain>
    </source>
</reference>
<organism>
    <name type="scientific">Volvox carteri</name>
    <name type="common">Green alga</name>
    <dbReference type="NCBI Taxonomy" id="3067"/>
    <lineage>
        <taxon>Eukaryota</taxon>
        <taxon>Viridiplantae</taxon>
        <taxon>Chlorophyta</taxon>
        <taxon>core chlorophytes</taxon>
        <taxon>Chlorophyceae</taxon>
        <taxon>CS clade</taxon>
        <taxon>Chlamydomonadales</taxon>
        <taxon>Volvocaceae</taxon>
        <taxon>Volvox</taxon>
    </lineage>
</organism>
<dbReference type="EMBL" id="X12581">
    <property type="protein sequence ID" value="CAA31093.1"/>
    <property type="molecule type" value="mRNA"/>
</dbReference>
<dbReference type="EMBL" id="X05776">
    <property type="protein sequence ID" value="CAA29228.1"/>
    <property type="molecule type" value="Genomic_DNA"/>
</dbReference>
<dbReference type="PIR" id="A28343">
    <property type="entry name" value="A28343"/>
</dbReference>
<dbReference type="PIR" id="S01012">
    <property type="entry name" value="S01012"/>
</dbReference>
<dbReference type="RefSeq" id="XP_002956842.1">
    <property type="nucleotide sequence ID" value="XM_002956796.1"/>
</dbReference>
<dbReference type="GlyConnect" id="564">
    <property type="glycosylation" value="5 N-Linked glycans"/>
</dbReference>
<dbReference type="GeneID" id="9622612"/>
<dbReference type="KEGG" id="vcn:VOLCADRAFT_83768"/>
<dbReference type="InterPro" id="IPR024616">
    <property type="entry name" value="Pherophorin"/>
</dbReference>
<dbReference type="Pfam" id="PF12499">
    <property type="entry name" value="DUF3707"/>
    <property type="match status" value="1"/>
</dbReference>
<accession>P08471</accession>
<name>SXIG_VOLCA</name>
<comment type="function">
    <text>The sexual inducer is a glycoprotein synthesized and released by sexual males at about the time they release sperm packets. It is one of the most potent biological effector molecules known: it exhibits full effectiveness in converting asexually growing males and females to the sexual pathway at about 10(-7) m.</text>
</comment>